<reference key="1">
    <citation type="submission" date="2006-03" db="EMBL/GenBank/DDBJ databases">
        <title>Complete sequence of chromosome of Psychrobacter cryohalolentis K5.</title>
        <authorList>
            <consortium name="US DOE Joint Genome Institute"/>
            <person name="Copeland A."/>
            <person name="Lucas S."/>
            <person name="Lapidus A."/>
            <person name="Barry K."/>
            <person name="Detter J.C."/>
            <person name="Glavina T."/>
            <person name="Hammon N."/>
            <person name="Israni S."/>
            <person name="Dalin E."/>
            <person name="Tice H."/>
            <person name="Pitluck S."/>
            <person name="Brettin T."/>
            <person name="Bruce D."/>
            <person name="Han C."/>
            <person name="Tapia R."/>
            <person name="Sims D.R."/>
            <person name="Gilna P."/>
            <person name="Schmutz J."/>
            <person name="Larimer F."/>
            <person name="Land M."/>
            <person name="Hauser L."/>
            <person name="Kyrpides N."/>
            <person name="Kim E."/>
            <person name="Richardson P."/>
        </authorList>
    </citation>
    <scope>NUCLEOTIDE SEQUENCE [LARGE SCALE GENOMIC DNA]</scope>
    <source>
        <strain>ATCC BAA-1226 / DSM 17306 / VKM B-2378 / K5</strain>
    </source>
</reference>
<sequence length="202" mass="21575">MGHYVSLFITSVFIENMALAYFLGMCTFLAVSKKVSTAIGLGVAVVVVMAITVPLNNLLFQFILKDGALAWAGFPDIDLSFLGLLSYIGLIAATVQILEMFLDKFVPSLYNALGVFLPLITVNCAILGGVLFMVERDYNFGESVVYGVGAGFGWALAITALAGIREKLKYSDIPAPLRGLGITFITVGLMSLGFMSFGGMSI</sequence>
<evidence type="ECO:0000255" key="1">
    <source>
        <dbReference type="HAMAP-Rule" id="MF_00429"/>
    </source>
</evidence>
<organism>
    <name type="scientific">Psychrobacter cryohalolentis (strain ATCC BAA-1226 / DSM 17306 / VKM B-2378 / K5)</name>
    <dbReference type="NCBI Taxonomy" id="335284"/>
    <lineage>
        <taxon>Bacteria</taxon>
        <taxon>Pseudomonadati</taxon>
        <taxon>Pseudomonadota</taxon>
        <taxon>Gammaproteobacteria</taxon>
        <taxon>Moraxellales</taxon>
        <taxon>Moraxellaceae</taxon>
        <taxon>Psychrobacter</taxon>
    </lineage>
</organism>
<protein>
    <recommendedName>
        <fullName evidence="1">Na(+)-translocating NADH-quinone reductase subunit E</fullName>
        <shortName evidence="1">Na(+)-NQR subunit E</shortName>
        <shortName evidence="1">Na(+)-translocating NQR subunit E</shortName>
        <ecNumber evidence="1">7.2.1.1</ecNumber>
    </recommendedName>
    <alternativeName>
        <fullName evidence="1">NQR complex subunit E</fullName>
    </alternativeName>
    <alternativeName>
        <fullName evidence="1">NQR-1 subunit E</fullName>
    </alternativeName>
</protein>
<gene>
    <name evidence="1" type="primary">nqrE</name>
    <name type="ordered locus">Pcryo_2428</name>
</gene>
<proteinExistence type="inferred from homology"/>
<keyword id="KW-0997">Cell inner membrane</keyword>
<keyword id="KW-1003">Cell membrane</keyword>
<keyword id="KW-0406">Ion transport</keyword>
<keyword id="KW-0472">Membrane</keyword>
<keyword id="KW-0520">NAD</keyword>
<keyword id="KW-0915">Sodium</keyword>
<keyword id="KW-0739">Sodium transport</keyword>
<keyword id="KW-1278">Translocase</keyword>
<keyword id="KW-0812">Transmembrane</keyword>
<keyword id="KW-1133">Transmembrane helix</keyword>
<keyword id="KW-0813">Transport</keyword>
<keyword id="KW-0830">Ubiquinone</keyword>
<accession>Q1Q7Z8</accession>
<dbReference type="EC" id="7.2.1.1" evidence="1"/>
<dbReference type="EMBL" id="CP000323">
    <property type="protein sequence ID" value="ABE76205.1"/>
    <property type="molecule type" value="Genomic_DNA"/>
</dbReference>
<dbReference type="RefSeq" id="WP_011281361.1">
    <property type="nucleotide sequence ID" value="NC_007969.1"/>
</dbReference>
<dbReference type="SMR" id="Q1Q7Z8"/>
<dbReference type="STRING" id="335284.Pcryo_2428"/>
<dbReference type="GeneID" id="60256000"/>
<dbReference type="KEGG" id="pcr:Pcryo_2428"/>
<dbReference type="eggNOG" id="COG2209">
    <property type="taxonomic scope" value="Bacteria"/>
</dbReference>
<dbReference type="HOGENOM" id="CLU_095255_0_0_6"/>
<dbReference type="Proteomes" id="UP000002425">
    <property type="component" value="Chromosome"/>
</dbReference>
<dbReference type="GO" id="GO:0009276">
    <property type="term" value="C:Gram-negative-bacterium-type cell wall"/>
    <property type="evidence" value="ECO:0007669"/>
    <property type="project" value="InterPro"/>
</dbReference>
<dbReference type="GO" id="GO:0005886">
    <property type="term" value="C:plasma membrane"/>
    <property type="evidence" value="ECO:0007669"/>
    <property type="project" value="UniProtKB-SubCell"/>
</dbReference>
<dbReference type="GO" id="GO:0016655">
    <property type="term" value="F:oxidoreductase activity, acting on NAD(P)H, quinone or similar compound as acceptor"/>
    <property type="evidence" value="ECO:0007669"/>
    <property type="project" value="UniProtKB-UniRule"/>
</dbReference>
<dbReference type="GO" id="GO:0022904">
    <property type="term" value="P:respiratory electron transport chain"/>
    <property type="evidence" value="ECO:0007669"/>
    <property type="project" value="InterPro"/>
</dbReference>
<dbReference type="GO" id="GO:0006814">
    <property type="term" value="P:sodium ion transport"/>
    <property type="evidence" value="ECO:0007669"/>
    <property type="project" value="UniProtKB-UniRule"/>
</dbReference>
<dbReference type="HAMAP" id="MF_00429">
    <property type="entry name" value="NqrE"/>
    <property type="match status" value="1"/>
</dbReference>
<dbReference type="InterPro" id="IPR003667">
    <property type="entry name" value="NqrDE/RnfAE"/>
</dbReference>
<dbReference type="InterPro" id="IPR050133">
    <property type="entry name" value="NqrDE/RnfAE_oxidrdctase"/>
</dbReference>
<dbReference type="InterPro" id="IPR010967">
    <property type="entry name" value="NqrE"/>
</dbReference>
<dbReference type="NCBIfam" id="TIGR01940">
    <property type="entry name" value="nqrE"/>
    <property type="match status" value="1"/>
</dbReference>
<dbReference type="PANTHER" id="PTHR30335">
    <property type="entry name" value="INTEGRAL MEMBRANE PROTEIN OF SOXR-REDUCING COMPLEX"/>
    <property type="match status" value="1"/>
</dbReference>
<dbReference type="PANTHER" id="PTHR30335:SF1">
    <property type="entry name" value="NA(+)-TRANSLOCATING NADH-QUINONE REDUCTASE SUBUNIT E"/>
    <property type="match status" value="1"/>
</dbReference>
<dbReference type="Pfam" id="PF02508">
    <property type="entry name" value="Rnf-Nqr"/>
    <property type="match status" value="1"/>
</dbReference>
<dbReference type="PIRSF" id="PIRSF006102">
    <property type="entry name" value="NQR_DE"/>
    <property type="match status" value="1"/>
</dbReference>
<comment type="function">
    <text evidence="1">NQR complex catalyzes the reduction of ubiquinone-1 to ubiquinol by two successive reactions, coupled with the transport of Na(+) ions from the cytoplasm to the periplasm. NqrA to NqrE are probably involved in the second step, the conversion of ubisemiquinone to ubiquinol.</text>
</comment>
<comment type="catalytic activity">
    <reaction evidence="1">
        <text>a ubiquinone + n Na(+)(in) + NADH + H(+) = a ubiquinol + n Na(+)(out) + NAD(+)</text>
        <dbReference type="Rhea" id="RHEA:47748"/>
        <dbReference type="Rhea" id="RHEA-COMP:9565"/>
        <dbReference type="Rhea" id="RHEA-COMP:9566"/>
        <dbReference type="ChEBI" id="CHEBI:15378"/>
        <dbReference type="ChEBI" id="CHEBI:16389"/>
        <dbReference type="ChEBI" id="CHEBI:17976"/>
        <dbReference type="ChEBI" id="CHEBI:29101"/>
        <dbReference type="ChEBI" id="CHEBI:57540"/>
        <dbReference type="ChEBI" id="CHEBI:57945"/>
        <dbReference type="EC" id="7.2.1.1"/>
    </reaction>
</comment>
<comment type="subunit">
    <text evidence="1">Composed of six subunits; NqrA, NqrB, NqrC, NqrD, NqrE and NqrF.</text>
</comment>
<comment type="subcellular location">
    <subcellularLocation>
        <location evidence="1">Cell inner membrane</location>
        <topology evidence="1">Multi-pass membrane protein</topology>
    </subcellularLocation>
</comment>
<comment type="similarity">
    <text evidence="1">Belongs to the NqrDE/RnfAE family.</text>
</comment>
<feature type="chain" id="PRO_1000060213" description="Na(+)-translocating NADH-quinone reductase subunit E">
    <location>
        <begin position="1"/>
        <end position="202"/>
    </location>
</feature>
<feature type="transmembrane region" description="Helical" evidence="1">
    <location>
        <begin position="5"/>
        <end position="25"/>
    </location>
</feature>
<feature type="transmembrane region" description="Helical" evidence="1">
    <location>
        <begin position="35"/>
        <end position="55"/>
    </location>
</feature>
<feature type="transmembrane region" description="Helical" evidence="1">
    <location>
        <begin position="81"/>
        <end position="101"/>
    </location>
</feature>
<feature type="transmembrane region" description="Helical" evidence="1">
    <location>
        <begin position="114"/>
        <end position="134"/>
    </location>
</feature>
<feature type="transmembrane region" description="Helical" evidence="1">
    <location>
        <begin position="144"/>
        <end position="164"/>
    </location>
</feature>
<feature type="transmembrane region" description="Helical" evidence="1">
    <location>
        <begin position="180"/>
        <end position="200"/>
    </location>
</feature>
<name>NQRE_PSYCK</name>